<evidence type="ECO:0000255" key="1">
    <source>
        <dbReference type="HAMAP-Rule" id="MF_00610"/>
    </source>
</evidence>
<feature type="signal peptide" evidence="1">
    <location>
        <begin position="1"/>
        <end position="34"/>
    </location>
</feature>
<feature type="chain" id="PRO_0000342030" description="Cytochrome f">
    <location>
        <begin position="35"/>
        <end position="317"/>
    </location>
</feature>
<feature type="transmembrane region" description="Helical" evidence="1">
    <location>
        <begin position="284"/>
        <end position="304"/>
    </location>
</feature>
<feature type="binding site" description="axial binding residue" evidence="1">
    <location>
        <position position="35"/>
    </location>
    <ligand>
        <name>heme</name>
        <dbReference type="ChEBI" id="CHEBI:30413"/>
    </ligand>
    <ligandPart>
        <name>Fe</name>
        <dbReference type="ChEBI" id="CHEBI:18248"/>
    </ligandPart>
</feature>
<feature type="binding site" description="covalent" evidence="1">
    <location>
        <position position="55"/>
    </location>
    <ligand>
        <name>heme</name>
        <dbReference type="ChEBI" id="CHEBI:30413"/>
    </ligand>
</feature>
<feature type="binding site" description="covalent" evidence="1">
    <location>
        <position position="58"/>
    </location>
    <ligand>
        <name>heme</name>
        <dbReference type="ChEBI" id="CHEBI:30413"/>
    </ligand>
</feature>
<feature type="binding site" description="axial binding residue" evidence="1">
    <location>
        <position position="59"/>
    </location>
    <ligand>
        <name>heme</name>
        <dbReference type="ChEBI" id="CHEBI:30413"/>
    </ligand>
    <ligandPart>
        <name>Fe</name>
        <dbReference type="ChEBI" id="CHEBI:18248"/>
    </ligandPart>
</feature>
<keyword id="KW-0249">Electron transport</keyword>
<keyword id="KW-0349">Heme</keyword>
<keyword id="KW-0408">Iron</keyword>
<keyword id="KW-0472">Membrane</keyword>
<keyword id="KW-0479">Metal-binding</keyword>
<keyword id="KW-0602">Photosynthesis</keyword>
<keyword id="KW-0732">Signal</keyword>
<keyword id="KW-0793">Thylakoid</keyword>
<keyword id="KW-0812">Transmembrane</keyword>
<keyword id="KW-1133">Transmembrane helix</keyword>
<keyword id="KW-0813">Transport</keyword>
<comment type="function">
    <text evidence="1">Component of the cytochrome b6-f complex, which mediates electron transfer between photosystem II (PSII) and photosystem I (PSI), cyclic electron flow around PSI, and state transitions.</text>
</comment>
<comment type="cofactor">
    <cofactor evidence="1">
        <name>heme</name>
        <dbReference type="ChEBI" id="CHEBI:30413"/>
    </cofactor>
    <text evidence="1">Binds 1 heme group covalently.</text>
</comment>
<comment type="subunit">
    <text evidence="1">The 4 large subunits of the cytochrome b6-f complex are cytochrome b6, subunit IV (17 kDa polypeptide, PetD), cytochrome f and the Rieske protein, while the 4 small subunits are PetG, PetL, PetM and PetN. The complex functions as a dimer.</text>
</comment>
<comment type="subcellular location">
    <subcellularLocation>
        <location evidence="1">Cellular thylakoid membrane</location>
        <topology evidence="1">Single-pass membrane protein</topology>
    </subcellularLocation>
</comment>
<comment type="similarity">
    <text evidence="1">Belongs to the cytochrome f family.</text>
</comment>
<gene>
    <name evidence="1" type="primary">petA</name>
    <name type="ordered locus">P9215_05411</name>
</gene>
<reference key="1">
    <citation type="journal article" date="2007" name="PLoS Genet.">
        <title>Patterns and implications of gene gain and loss in the evolution of Prochlorococcus.</title>
        <authorList>
            <person name="Kettler G.C."/>
            <person name="Martiny A.C."/>
            <person name="Huang K."/>
            <person name="Zucker J."/>
            <person name="Coleman M.L."/>
            <person name="Rodrigue S."/>
            <person name="Chen F."/>
            <person name="Lapidus A."/>
            <person name="Ferriera S."/>
            <person name="Johnson J."/>
            <person name="Steglich C."/>
            <person name="Church G.M."/>
            <person name="Richardson P."/>
            <person name="Chisholm S.W."/>
        </authorList>
    </citation>
    <scope>NUCLEOTIDE SEQUENCE [LARGE SCALE GENOMIC DNA]</scope>
    <source>
        <strain>MIT 9215</strain>
    </source>
</reference>
<dbReference type="EMBL" id="CP000825">
    <property type="protein sequence ID" value="ABV50157.1"/>
    <property type="molecule type" value="Genomic_DNA"/>
</dbReference>
<dbReference type="RefSeq" id="WP_012007288.1">
    <property type="nucleotide sequence ID" value="NC_009840.1"/>
</dbReference>
<dbReference type="SMR" id="A8G3H6"/>
<dbReference type="STRING" id="93060.P9215_05411"/>
<dbReference type="KEGG" id="pmh:P9215_05411"/>
<dbReference type="eggNOG" id="COG3258">
    <property type="taxonomic scope" value="Bacteria"/>
</dbReference>
<dbReference type="HOGENOM" id="CLU_033498_0_0_3"/>
<dbReference type="OrthoDB" id="581091at2"/>
<dbReference type="Proteomes" id="UP000002014">
    <property type="component" value="Chromosome"/>
</dbReference>
<dbReference type="GO" id="GO:0031676">
    <property type="term" value="C:plasma membrane-derived thylakoid membrane"/>
    <property type="evidence" value="ECO:0007669"/>
    <property type="project" value="UniProtKB-SubCell"/>
</dbReference>
<dbReference type="GO" id="GO:0009055">
    <property type="term" value="F:electron transfer activity"/>
    <property type="evidence" value="ECO:0007669"/>
    <property type="project" value="UniProtKB-UniRule"/>
</dbReference>
<dbReference type="GO" id="GO:0020037">
    <property type="term" value="F:heme binding"/>
    <property type="evidence" value="ECO:0007669"/>
    <property type="project" value="InterPro"/>
</dbReference>
<dbReference type="GO" id="GO:0005506">
    <property type="term" value="F:iron ion binding"/>
    <property type="evidence" value="ECO:0007669"/>
    <property type="project" value="InterPro"/>
</dbReference>
<dbReference type="GO" id="GO:0015979">
    <property type="term" value="P:photosynthesis"/>
    <property type="evidence" value="ECO:0007669"/>
    <property type="project" value="UniProtKB-UniRule"/>
</dbReference>
<dbReference type="FunFam" id="2.60.40.830:FF:000001">
    <property type="entry name" value="Cytochrome f"/>
    <property type="match status" value="1"/>
</dbReference>
<dbReference type="Gene3D" id="2.40.50.100">
    <property type="match status" value="1"/>
</dbReference>
<dbReference type="Gene3D" id="2.60.40.830">
    <property type="entry name" value="Cytochrome f large domain"/>
    <property type="match status" value="1"/>
</dbReference>
<dbReference type="Gene3D" id="1.20.5.700">
    <property type="entry name" value="Single helix bin"/>
    <property type="match status" value="1"/>
</dbReference>
<dbReference type="HAMAP" id="MF_00610">
    <property type="entry name" value="Cytb6_f_cytF"/>
    <property type="match status" value="1"/>
</dbReference>
<dbReference type="InterPro" id="IPR024058">
    <property type="entry name" value="Cyt-f_TM"/>
</dbReference>
<dbReference type="InterPro" id="IPR002325">
    <property type="entry name" value="Cyt_f"/>
</dbReference>
<dbReference type="InterPro" id="IPR024094">
    <property type="entry name" value="Cyt_f_lg_dom"/>
</dbReference>
<dbReference type="InterPro" id="IPR036826">
    <property type="entry name" value="Cyt_f_lg_dom_sf"/>
</dbReference>
<dbReference type="InterPro" id="IPR011054">
    <property type="entry name" value="Rudment_hybrid_motif"/>
</dbReference>
<dbReference type="NCBIfam" id="NF002736">
    <property type="entry name" value="PRK02693.1"/>
    <property type="match status" value="1"/>
</dbReference>
<dbReference type="PANTHER" id="PTHR33288">
    <property type="match status" value="1"/>
</dbReference>
<dbReference type="PANTHER" id="PTHR33288:SF10">
    <property type="entry name" value="CYTOCHROME F"/>
    <property type="match status" value="1"/>
</dbReference>
<dbReference type="Pfam" id="PF01333">
    <property type="entry name" value="Apocytochr_F_C"/>
    <property type="match status" value="1"/>
</dbReference>
<dbReference type="Pfam" id="PF16639">
    <property type="entry name" value="Apocytochr_F_N"/>
    <property type="match status" value="1"/>
</dbReference>
<dbReference type="PRINTS" id="PR00610">
    <property type="entry name" value="CYTOCHROMEF"/>
</dbReference>
<dbReference type="SUPFAM" id="SSF103431">
    <property type="entry name" value="Cytochrome f subunit of the cytochrome b6f complex, transmembrane anchor"/>
    <property type="match status" value="1"/>
</dbReference>
<dbReference type="SUPFAM" id="SSF49441">
    <property type="entry name" value="Cytochrome f, large domain"/>
    <property type="match status" value="1"/>
</dbReference>
<dbReference type="SUPFAM" id="SSF51246">
    <property type="entry name" value="Rudiment single hybrid motif"/>
    <property type="match status" value="1"/>
</dbReference>
<dbReference type="PROSITE" id="PS51010">
    <property type="entry name" value="CYTF"/>
    <property type="match status" value="1"/>
</dbReference>
<proteinExistence type="inferred from homology"/>
<sequence length="317" mass="34732">MKGLKNQIMKKTSLFICTLLFILSIVFYPKITFAYPFWAQQNYESPREATGKIVCANCHLAQMPTIAEVPQSVGADSVFKAVVKIPYKNDLKEIGADGSEVPLQVGAVVMLPDGFKLAPQERWTEEIKEETEGVYFTNYSEEKENIIIVGPLPGDTNKEIVFPVLSPDPSTNKEYHYGKYSLHIGGNRGRGQVYPTGDKSNNVVFTSSTSGTIDSIDIIEDGSYKVNIENDNGEITTEEVPVGPQLIVKAQDKINAGDPLTNDPNVGGFGQLDAEVVLQSPYRVIGLIAFFIGVGLTQILLVLKKKQVEKVQAAEGI</sequence>
<name>CYF_PROM2</name>
<protein>
    <recommendedName>
        <fullName evidence="1">Cytochrome f</fullName>
    </recommendedName>
</protein>
<accession>A8G3H6</accession>
<organism>
    <name type="scientific">Prochlorococcus marinus (strain MIT 9215)</name>
    <dbReference type="NCBI Taxonomy" id="93060"/>
    <lineage>
        <taxon>Bacteria</taxon>
        <taxon>Bacillati</taxon>
        <taxon>Cyanobacteriota</taxon>
        <taxon>Cyanophyceae</taxon>
        <taxon>Synechococcales</taxon>
        <taxon>Prochlorococcaceae</taxon>
        <taxon>Prochlorococcus</taxon>
    </lineage>
</organism>